<accession>F4HK38</accession>
<feature type="chain" id="PRO_0000417356" description="Methylated-DNA--protein-cysteine methyltransferase">
    <location>
        <begin position="1"/>
        <end position="173"/>
    </location>
</feature>
<feature type="active site" description="Nucleophile; methyl group acceptor" evidence="1">
    <location>
        <position position="143"/>
    </location>
</feature>
<reference key="1">
    <citation type="journal article" date="2011" name="J. Bacteriol.">
        <title>Complete genome sequence of hyperthermophilic Pyrococcus sp. strain NA2, isolated from a deep-sea hydrothermal vent area.</title>
        <authorList>
            <person name="Lee H.S."/>
            <person name="Bae S.S."/>
            <person name="Kim M.S."/>
            <person name="Kwon K.K."/>
            <person name="Kang S.G."/>
            <person name="Lee J.H."/>
        </authorList>
    </citation>
    <scope>NUCLEOTIDE SEQUENCE [LARGE SCALE GENOMIC DNA]</scope>
    <source>
        <strain>NA2</strain>
    </source>
</reference>
<proteinExistence type="inferred from homology"/>
<keyword id="KW-0963">Cytoplasm</keyword>
<keyword id="KW-0227">DNA damage</keyword>
<keyword id="KW-0234">DNA repair</keyword>
<keyword id="KW-0489">Methyltransferase</keyword>
<keyword id="KW-0808">Transferase</keyword>
<sequence length="173" mass="19862">MISYGRFNILGRELTIAIVWNNKGIQGITYSLDGIEFLEEQISRIINHLKSRNVRVNLSQEESEYPELVFMVLTGYVSNEEAFKELSLEGLTEFEIKVYSWLVKNVKRGEVITYGKVAKALKTSPLAIGGAMRRNPYPIIVPCHRVIGKRNKFLYTPKPSYKKFLLEVEGWTS</sequence>
<comment type="function">
    <text evidence="1">Involved in the cellular defense against the biological effects of O6-methylguanine (O6-MeG) and O4-methylthymine (O4-MeT) in DNA. Repairs the methylated nucleobase in DNA by stoichiometrically transferring the methyl group to a cysteine residue in the enzyme. This is a suicide reaction: the enzyme is irreversibly inactivated.</text>
</comment>
<comment type="catalytic activity">
    <reaction evidence="1">
        <text>a 6-O-methyl-2'-deoxyguanosine in DNA + L-cysteinyl-[protein] = S-methyl-L-cysteinyl-[protein] + a 2'-deoxyguanosine in DNA</text>
        <dbReference type="Rhea" id="RHEA:24000"/>
        <dbReference type="Rhea" id="RHEA-COMP:10131"/>
        <dbReference type="Rhea" id="RHEA-COMP:10132"/>
        <dbReference type="Rhea" id="RHEA-COMP:11367"/>
        <dbReference type="Rhea" id="RHEA-COMP:11368"/>
        <dbReference type="ChEBI" id="CHEBI:29950"/>
        <dbReference type="ChEBI" id="CHEBI:82612"/>
        <dbReference type="ChEBI" id="CHEBI:85445"/>
        <dbReference type="ChEBI" id="CHEBI:85448"/>
        <dbReference type="EC" id="2.1.1.63"/>
    </reaction>
</comment>
<comment type="catalytic activity">
    <reaction evidence="1">
        <text>a 4-O-methyl-thymidine in DNA + L-cysteinyl-[protein] = a thymidine in DNA + S-methyl-L-cysteinyl-[protein]</text>
        <dbReference type="Rhea" id="RHEA:53428"/>
        <dbReference type="Rhea" id="RHEA-COMP:10131"/>
        <dbReference type="Rhea" id="RHEA-COMP:10132"/>
        <dbReference type="Rhea" id="RHEA-COMP:13555"/>
        <dbReference type="Rhea" id="RHEA-COMP:13556"/>
        <dbReference type="ChEBI" id="CHEBI:29950"/>
        <dbReference type="ChEBI" id="CHEBI:82612"/>
        <dbReference type="ChEBI" id="CHEBI:137386"/>
        <dbReference type="ChEBI" id="CHEBI:137387"/>
        <dbReference type="EC" id="2.1.1.63"/>
    </reaction>
</comment>
<comment type="subcellular location">
    <subcellularLocation>
        <location evidence="1">Cytoplasm</location>
    </subcellularLocation>
</comment>
<comment type="miscellaneous">
    <text evidence="1">This enzyme catalyzes only one turnover and therefore is not strictly catalytic. According to one definition, an enzyme is a biocatalyst that acts repeatedly and over many reaction cycles.</text>
</comment>
<comment type="similarity">
    <text evidence="1">Belongs to the MGMT family.</text>
</comment>
<protein>
    <recommendedName>
        <fullName evidence="1">Methylated-DNA--protein-cysteine methyltransferase</fullName>
        <ecNumber evidence="1">2.1.1.63</ecNumber>
    </recommendedName>
    <alternativeName>
        <fullName evidence="1">6-O-methylguanine-DNA methyltransferase</fullName>
        <shortName evidence="1">MGMT</shortName>
    </alternativeName>
    <alternativeName>
        <fullName evidence="1">O-6-methylguanine-DNA-alkyltransferase</fullName>
    </alternativeName>
</protein>
<name>OGT_PYRSN</name>
<evidence type="ECO:0000250" key="1">
    <source>
        <dbReference type="UniProtKB" id="O74023"/>
    </source>
</evidence>
<organism>
    <name type="scientific">Pyrococcus sp. (strain NA2)</name>
    <dbReference type="NCBI Taxonomy" id="342949"/>
    <lineage>
        <taxon>Archaea</taxon>
        <taxon>Methanobacteriati</taxon>
        <taxon>Methanobacteriota</taxon>
        <taxon>Thermococci</taxon>
        <taxon>Thermococcales</taxon>
        <taxon>Thermococcaceae</taxon>
        <taxon>Pyrococcus</taxon>
    </lineage>
</organism>
<dbReference type="EC" id="2.1.1.63" evidence="1"/>
<dbReference type="EMBL" id="CP002670">
    <property type="protein sequence ID" value="AEC51350.1"/>
    <property type="molecule type" value="Genomic_DNA"/>
</dbReference>
<dbReference type="RefSeq" id="WP_013747906.1">
    <property type="nucleotide sequence ID" value="NC_015474.1"/>
</dbReference>
<dbReference type="SMR" id="F4HK38"/>
<dbReference type="STRING" id="342949.PNA2_0433"/>
<dbReference type="GeneID" id="10553898"/>
<dbReference type="KEGG" id="pyn:PNA2_0433"/>
<dbReference type="PATRIC" id="fig|342949.8.peg.430"/>
<dbReference type="eggNOG" id="arCOG02724">
    <property type="taxonomic scope" value="Archaea"/>
</dbReference>
<dbReference type="HOGENOM" id="CLU_000445_52_2_2"/>
<dbReference type="OrthoDB" id="372118at2157"/>
<dbReference type="Proteomes" id="UP000008293">
    <property type="component" value="Chromosome"/>
</dbReference>
<dbReference type="GO" id="GO:0005737">
    <property type="term" value="C:cytoplasm"/>
    <property type="evidence" value="ECO:0007669"/>
    <property type="project" value="UniProtKB-SubCell"/>
</dbReference>
<dbReference type="GO" id="GO:0003908">
    <property type="term" value="F:methylated-DNA-[protein]-cysteine S-methyltransferase activity"/>
    <property type="evidence" value="ECO:0007669"/>
    <property type="project" value="UniProtKB-EC"/>
</dbReference>
<dbReference type="GO" id="GO:0006281">
    <property type="term" value="P:DNA repair"/>
    <property type="evidence" value="ECO:0007669"/>
    <property type="project" value="UniProtKB-KW"/>
</dbReference>
<dbReference type="GO" id="GO:0032259">
    <property type="term" value="P:methylation"/>
    <property type="evidence" value="ECO:0007669"/>
    <property type="project" value="UniProtKB-KW"/>
</dbReference>
<dbReference type="CDD" id="cd06445">
    <property type="entry name" value="ATase"/>
    <property type="match status" value="1"/>
</dbReference>
<dbReference type="Gene3D" id="3.30.160.70">
    <property type="entry name" value="Methylated DNA-protein cysteine methyltransferase domain"/>
    <property type="match status" value="1"/>
</dbReference>
<dbReference type="Gene3D" id="1.10.10.10">
    <property type="entry name" value="Winged helix-like DNA-binding domain superfamily/Winged helix DNA-binding domain"/>
    <property type="match status" value="1"/>
</dbReference>
<dbReference type="InterPro" id="IPR054936">
    <property type="entry name" value="DNA_protcyst_Mta_Thcoc"/>
</dbReference>
<dbReference type="InterPro" id="IPR001497">
    <property type="entry name" value="MethylDNA_cys_MeTrfase_AS"/>
</dbReference>
<dbReference type="InterPro" id="IPR014048">
    <property type="entry name" value="MethylDNA_cys_MeTrfase_DNA-bd"/>
</dbReference>
<dbReference type="InterPro" id="IPR036217">
    <property type="entry name" value="MethylDNA_cys_MeTrfase_DNAb"/>
</dbReference>
<dbReference type="InterPro" id="IPR015236">
    <property type="entry name" value="MGMT_N"/>
</dbReference>
<dbReference type="InterPro" id="IPR036631">
    <property type="entry name" value="MGMT_N_sf"/>
</dbReference>
<dbReference type="InterPro" id="IPR036388">
    <property type="entry name" value="WH-like_DNA-bd_sf"/>
</dbReference>
<dbReference type="NCBIfam" id="NF041132">
    <property type="entry name" value="DNA_protcyst_Mta_Thcoc"/>
    <property type="match status" value="1"/>
</dbReference>
<dbReference type="NCBIfam" id="TIGR00589">
    <property type="entry name" value="ogt"/>
    <property type="match status" value="1"/>
</dbReference>
<dbReference type="NCBIfam" id="NF003022">
    <property type="entry name" value="PRK03887.1"/>
    <property type="match status" value="1"/>
</dbReference>
<dbReference type="PANTHER" id="PTHR46460">
    <property type="entry name" value="METHYLATED-DNA--PROTEIN-CYSTEINE METHYLTRANSFERASE"/>
    <property type="match status" value="1"/>
</dbReference>
<dbReference type="PANTHER" id="PTHR46460:SF1">
    <property type="entry name" value="METHYLATED-DNA--PROTEIN-CYSTEINE METHYLTRANSFERASE"/>
    <property type="match status" value="1"/>
</dbReference>
<dbReference type="Pfam" id="PF01035">
    <property type="entry name" value="DNA_binding_1"/>
    <property type="match status" value="1"/>
</dbReference>
<dbReference type="Pfam" id="PF09153">
    <property type="entry name" value="MGMT_N"/>
    <property type="match status" value="1"/>
</dbReference>
<dbReference type="SUPFAM" id="SSF53155">
    <property type="entry name" value="Methylated DNA-protein cysteine methyltransferase domain"/>
    <property type="match status" value="1"/>
</dbReference>
<dbReference type="SUPFAM" id="SSF46767">
    <property type="entry name" value="Methylated DNA-protein cysteine methyltransferase, C-terminal domain"/>
    <property type="match status" value="1"/>
</dbReference>
<dbReference type="PROSITE" id="PS00374">
    <property type="entry name" value="MGMT"/>
    <property type="match status" value="1"/>
</dbReference>
<gene>
    <name evidence="1" type="primary">ogt</name>
    <name type="ordered locus">PNA2_0433</name>
</gene>